<reference key="1">
    <citation type="journal article" date="2004" name="Nature">
        <title>Genome sequence of the Brown Norway rat yields insights into mammalian evolution.</title>
        <authorList>
            <person name="Gibbs R.A."/>
            <person name="Weinstock G.M."/>
            <person name="Metzker M.L."/>
            <person name="Muzny D.M."/>
            <person name="Sodergren E.J."/>
            <person name="Scherer S."/>
            <person name="Scott G."/>
            <person name="Steffen D."/>
            <person name="Worley K.C."/>
            <person name="Burch P.E."/>
            <person name="Okwuonu G."/>
            <person name="Hines S."/>
            <person name="Lewis L."/>
            <person name="Deramo C."/>
            <person name="Delgado O."/>
            <person name="Dugan-Rocha S."/>
            <person name="Miner G."/>
            <person name="Morgan M."/>
            <person name="Hawes A."/>
            <person name="Gill R."/>
            <person name="Holt R.A."/>
            <person name="Adams M.D."/>
            <person name="Amanatides P.G."/>
            <person name="Baden-Tillson H."/>
            <person name="Barnstead M."/>
            <person name="Chin S."/>
            <person name="Evans C.A."/>
            <person name="Ferriera S."/>
            <person name="Fosler C."/>
            <person name="Glodek A."/>
            <person name="Gu Z."/>
            <person name="Jennings D."/>
            <person name="Kraft C.L."/>
            <person name="Nguyen T."/>
            <person name="Pfannkoch C.M."/>
            <person name="Sitter C."/>
            <person name="Sutton G.G."/>
            <person name="Venter J.C."/>
            <person name="Woodage T."/>
            <person name="Smith D."/>
            <person name="Lee H.-M."/>
            <person name="Gustafson E."/>
            <person name="Cahill P."/>
            <person name="Kana A."/>
            <person name="Doucette-Stamm L."/>
            <person name="Weinstock K."/>
            <person name="Fechtel K."/>
            <person name="Weiss R.B."/>
            <person name="Dunn D.M."/>
            <person name="Green E.D."/>
            <person name="Blakesley R.W."/>
            <person name="Bouffard G.G."/>
            <person name="De Jong P.J."/>
            <person name="Osoegawa K."/>
            <person name="Zhu B."/>
            <person name="Marra M."/>
            <person name="Schein J."/>
            <person name="Bosdet I."/>
            <person name="Fjell C."/>
            <person name="Jones S."/>
            <person name="Krzywinski M."/>
            <person name="Mathewson C."/>
            <person name="Siddiqui A."/>
            <person name="Wye N."/>
            <person name="McPherson J."/>
            <person name="Zhao S."/>
            <person name="Fraser C.M."/>
            <person name="Shetty J."/>
            <person name="Shatsman S."/>
            <person name="Geer K."/>
            <person name="Chen Y."/>
            <person name="Abramzon S."/>
            <person name="Nierman W.C."/>
            <person name="Havlak P.H."/>
            <person name="Chen R."/>
            <person name="Durbin K.J."/>
            <person name="Egan A."/>
            <person name="Ren Y."/>
            <person name="Song X.-Z."/>
            <person name="Li B."/>
            <person name="Liu Y."/>
            <person name="Qin X."/>
            <person name="Cawley S."/>
            <person name="Cooney A.J."/>
            <person name="D'Souza L.M."/>
            <person name="Martin K."/>
            <person name="Wu J.Q."/>
            <person name="Gonzalez-Garay M.L."/>
            <person name="Jackson A.R."/>
            <person name="Kalafus K.J."/>
            <person name="McLeod M.P."/>
            <person name="Milosavljevic A."/>
            <person name="Virk D."/>
            <person name="Volkov A."/>
            <person name="Wheeler D.A."/>
            <person name="Zhang Z."/>
            <person name="Bailey J.A."/>
            <person name="Eichler E.E."/>
            <person name="Tuzun E."/>
            <person name="Birney E."/>
            <person name="Mongin E."/>
            <person name="Ureta-Vidal A."/>
            <person name="Woodwark C."/>
            <person name="Zdobnov E."/>
            <person name="Bork P."/>
            <person name="Suyama M."/>
            <person name="Torrents D."/>
            <person name="Alexandersson M."/>
            <person name="Trask B.J."/>
            <person name="Young J.M."/>
            <person name="Huang H."/>
            <person name="Wang H."/>
            <person name="Xing H."/>
            <person name="Daniels S."/>
            <person name="Gietzen D."/>
            <person name="Schmidt J."/>
            <person name="Stevens K."/>
            <person name="Vitt U."/>
            <person name="Wingrove J."/>
            <person name="Camara F."/>
            <person name="Mar Alba M."/>
            <person name="Abril J.F."/>
            <person name="Guigo R."/>
            <person name="Smit A."/>
            <person name="Dubchak I."/>
            <person name="Rubin E.M."/>
            <person name="Couronne O."/>
            <person name="Poliakov A."/>
            <person name="Huebner N."/>
            <person name="Ganten D."/>
            <person name="Goesele C."/>
            <person name="Hummel O."/>
            <person name="Kreitler T."/>
            <person name="Lee Y.-A."/>
            <person name="Monti J."/>
            <person name="Schulz H."/>
            <person name="Zimdahl H."/>
            <person name="Himmelbauer H."/>
            <person name="Lehrach H."/>
            <person name="Jacob H.J."/>
            <person name="Bromberg S."/>
            <person name="Gullings-Handley J."/>
            <person name="Jensen-Seaman M.I."/>
            <person name="Kwitek A.E."/>
            <person name="Lazar J."/>
            <person name="Pasko D."/>
            <person name="Tonellato P.J."/>
            <person name="Twigger S."/>
            <person name="Ponting C.P."/>
            <person name="Duarte J.M."/>
            <person name="Rice S."/>
            <person name="Goodstadt L."/>
            <person name="Beatson S.A."/>
            <person name="Emes R.D."/>
            <person name="Winter E.E."/>
            <person name="Webber C."/>
            <person name="Brandt P."/>
            <person name="Nyakatura G."/>
            <person name="Adetobi M."/>
            <person name="Chiaromonte F."/>
            <person name="Elnitski L."/>
            <person name="Eswara P."/>
            <person name="Hardison R.C."/>
            <person name="Hou M."/>
            <person name="Kolbe D."/>
            <person name="Makova K."/>
            <person name="Miller W."/>
            <person name="Nekrutenko A."/>
            <person name="Riemer C."/>
            <person name="Schwartz S."/>
            <person name="Taylor J."/>
            <person name="Yang S."/>
            <person name="Zhang Y."/>
            <person name="Lindpaintner K."/>
            <person name="Andrews T.D."/>
            <person name="Caccamo M."/>
            <person name="Clamp M."/>
            <person name="Clarke L."/>
            <person name="Curwen V."/>
            <person name="Durbin R.M."/>
            <person name="Eyras E."/>
            <person name="Searle S.M."/>
            <person name="Cooper G.M."/>
            <person name="Batzoglou S."/>
            <person name="Brudno M."/>
            <person name="Sidow A."/>
            <person name="Stone E.A."/>
            <person name="Payseur B.A."/>
            <person name="Bourque G."/>
            <person name="Lopez-Otin C."/>
            <person name="Puente X.S."/>
            <person name="Chakrabarti K."/>
            <person name="Chatterji S."/>
            <person name="Dewey C."/>
            <person name="Pachter L."/>
            <person name="Bray N."/>
            <person name="Yap V.B."/>
            <person name="Caspi A."/>
            <person name="Tesler G."/>
            <person name="Pevzner P.A."/>
            <person name="Haussler D."/>
            <person name="Roskin K.M."/>
            <person name="Baertsch R."/>
            <person name="Clawson H."/>
            <person name="Furey T.S."/>
            <person name="Hinrichs A.S."/>
            <person name="Karolchik D."/>
            <person name="Kent W.J."/>
            <person name="Rosenbloom K.R."/>
            <person name="Trumbower H."/>
            <person name="Weirauch M."/>
            <person name="Cooper D.N."/>
            <person name="Stenson P.D."/>
            <person name="Ma B."/>
            <person name="Brent M."/>
            <person name="Arumugam M."/>
            <person name="Shteynberg D."/>
            <person name="Copley R.R."/>
            <person name="Taylor M.S."/>
            <person name="Riethman H."/>
            <person name="Mudunuri U."/>
            <person name="Peterson J."/>
            <person name="Guyer M."/>
            <person name="Felsenfeld A."/>
            <person name="Old S."/>
            <person name="Mockrin S."/>
            <person name="Collins F.S."/>
        </authorList>
    </citation>
    <scope>NUCLEOTIDE SEQUENCE [LARGE SCALE GENOMIC DNA]</scope>
    <source>
        <strain>Brown Norway</strain>
    </source>
</reference>
<reference key="2">
    <citation type="journal article" date="2009" name="PLoS ONE">
        <title>FE65 binds Teashirt, inhibiting expression of the primate-specific caspase-4.</title>
        <authorList>
            <person name="Kajiwara Y."/>
            <person name="Akram A."/>
            <person name="Katsel P."/>
            <person name="Haroutunian V."/>
            <person name="Schmeidler J."/>
            <person name="Beecham G."/>
            <person name="Haines J.L."/>
            <person name="Pericak-Vance M.A."/>
            <person name="Buxbaum J.D."/>
        </authorList>
    </citation>
    <scope>INTERACTION WITH APBB1</scope>
    <scope>SUBCELLULAR LOCATION</scope>
    <scope>TISSUE SPECIFICITY</scope>
</reference>
<dbReference type="EMBL" id="CH473979">
    <property type="protein sequence ID" value="EDM07600.1"/>
    <property type="status" value="ALT_INIT"/>
    <property type="molecule type" value="Genomic_DNA"/>
</dbReference>
<dbReference type="RefSeq" id="NP_001100976.1">
    <property type="nucleotide sequence ID" value="NM_001107506.1"/>
</dbReference>
<dbReference type="SMR" id="D3ZKB9"/>
<dbReference type="FunCoup" id="D3ZKB9">
    <property type="interactions" value="693"/>
</dbReference>
<dbReference type="STRING" id="10116.ENSRNOP00000018931"/>
<dbReference type="PhosphoSitePlus" id="D3ZKB9"/>
<dbReference type="PaxDb" id="10116-ENSRNOP00000018931"/>
<dbReference type="GeneID" id="308523"/>
<dbReference type="KEGG" id="rno:308523"/>
<dbReference type="UCSC" id="RGD:1306322">
    <property type="organism name" value="rat"/>
</dbReference>
<dbReference type="AGR" id="RGD:1306322"/>
<dbReference type="CTD" id="57616"/>
<dbReference type="RGD" id="1306322">
    <property type="gene designation" value="Tshz3"/>
</dbReference>
<dbReference type="eggNOG" id="ENOG502RJS7">
    <property type="taxonomic scope" value="Eukaryota"/>
</dbReference>
<dbReference type="InParanoid" id="D3ZKB9"/>
<dbReference type="PhylomeDB" id="D3ZKB9"/>
<dbReference type="TreeFam" id="TF328447"/>
<dbReference type="PRO" id="PR:D3ZKB9"/>
<dbReference type="Proteomes" id="UP000002494">
    <property type="component" value="Unplaced"/>
</dbReference>
<dbReference type="Proteomes" id="UP000234681">
    <property type="component" value="Chromosome 1"/>
</dbReference>
<dbReference type="GO" id="GO:0030426">
    <property type="term" value="C:growth cone"/>
    <property type="evidence" value="ECO:0000314"/>
    <property type="project" value="UniProtKB"/>
</dbReference>
<dbReference type="GO" id="GO:0005634">
    <property type="term" value="C:nucleus"/>
    <property type="evidence" value="ECO:0000250"/>
    <property type="project" value="UniProtKB"/>
</dbReference>
<dbReference type="GO" id="GO:0003682">
    <property type="term" value="F:chromatin binding"/>
    <property type="evidence" value="ECO:0000250"/>
    <property type="project" value="UniProtKB"/>
</dbReference>
<dbReference type="GO" id="GO:0003677">
    <property type="term" value="F:DNA binding"/>
    <property type="evidence" value="ECO:0000318"/>
    <property type="project" value="GO_Central"/>
</dbReference>
<dbReference type="GO" id="GO:0000981">
    <property type="term" value="F:DNA-binding transcription factor activity, RNA polymerase II-specific"/>
    <property type="evidence" value="ECO:0000318"/>
    <property type="project" value="GO_Central"/>
</dbReference>
<dbReference type="GO" id="GO:0008270">
    <property type="term" value="F:zinc ion binding"/>
    <property type="evidence" value="ECO:0007669"/>
    <property type="project" value="UniProtKB-KW"/>
</dbReference>
<dbReference type="GO" id="GO:0001701">
    <property type="term" value="P:in utero embryonic development"/>
    <property type="evidence" value="ECO:0000266"/>
    <property type="project" value="RGD"/>
</dbReference>
<dbReference type="GO" id="GO:0060993">
    <property type="term" value="P:kidney morphogenesis"/>
    <property type="evidence" value="ECO:0000266"/>
    <property type="project" value="RGD"/>
</dbReference>
<dbReference type="GO" id="GO:0072195">
    <property type="term" value="P:kidney smooth muscle cell differentiation"/>
    <property type="evidence" value="ECO:0000266"/>
    <property type="project" value="RGD"/>
</dbReference>
<dbReference type="GO" id="GO:0060291">
    <property type="term" value="P:long-term synaptic potentiation"/>
    <property type="evidence" value="ECO:0000250"/>
    <property type="project" value="UniProtKB"/>
</dbReference>
<dbReference type="GO" id="GO:0030324">
    <property type="term" value="P:lung development"/>
    <property type="evidence" value="ECO:0000266"/>
    <property type="project" value="RGD"/>
</dbReference>
<dbReference type="GO" id="GO:0001656">
    <property type="term" value="P:metanephros development"/>
    <property type="evidence" value="ECO:0000266"/>
    <property type="project" value="RGD"/>
</dbReference>
<dbReference type="GO" id="GO:0050881">
    <property type="term" value="P:musculoskeletal movement"/>
    <property type="evidence" value="ECO:0000266"/>
    <property type="project" value="RGD"/>
</dbReference>
<dbReference type="GO" id="GO:0045892">
    <property type="term" value="P:negative regulation of DNA-templated transcription"/>
    <property type="evidence" value="ECO:0000250"/>
    <property type="project" value="UniProtKB"/>
</dbReference>
<dbReference type="GO" id="GO:0051152">
    <property type="term" value="P:positive regulation of smooth muscle cell differentiation"/>
    <property type="evidence" value="ECO:0000266"/>
    <property type="project" value="RGD"/>
</dbReference>
<dbReference type="GO" id="GO:0051968">
    <property type="term" value="P:positive regulation of synaptic transmission, glutamatergic"/>
    <property type="evidence" value="ECO:0000250"/>
    <property type="project" value="UniProtKB"/>
</dbReference>
<dbReference type="GO" id="GO:0002087">
    <property type="term" value="P:regulation of respiratory gaseous exchange by nervous system process"/>
    <property type="evidence" value="ECO:0000250"/>
    <property type="project" value="UniProtKB"/>
</dbReference>
<dbReference type="GO" id="GO:0006357">
    <property type="term" value="P:regulation of transcription by RNA polymerase II"/>
    <property type="evidence" value="ECO:0000318"/>
    <property type="project" value="GO_Central"/>
</dbReference>
<dbReference type="GO" id="GO:0050975">
    <property type="term" value="P:sensory perception of touch"/>
    <property type="evidence" value="ECO:0000266"/>
    <property type="project" value="RGD"/>
</dbReference>
<dbReference type="GO" id="GO:0048745">
    <property type="term" value="P:smooth muscle tissue development"/>
    <property type="evidence" value="ECO:0000266"/>
    <property type="project" value="RGD"/>
</dbReference>
<dbReference type="GO" id="GO:0072193">
    <property type="term" value="P:ureter smooth muscle cell differentiation"/>
    <property type="evidence" value="ECO:0000266"/>
    <property type="project" value="RGD"/>
</dbReference>
<dbReference type="GO" id="GO:0001657">
    <property type="term" value="P:ureteric bud development"/>
    <property type="evidence" value="ECO:0000266"/>
    <property type="project" value="RGD"/>
</dbReference>
<dbReference type="GO" id="GO:0072105">
    <property type="term" value="P:ureteric peristalsis"/>
    <property type="evidence" value="ECO:0000266"/>
    <property type="project" value="RGD"/>
</dbReference>
<dbReference type="CDD" id="cd00086">
    <property type="entry name" value="homeodomain"/>
    <property type="match status" value="1"/>
</dbReference>
<dbReference type="Gene3D" id="3.30.160.60">
    <property type="entry name" value="Classic Zinc Finger"/>
    <property type="match status" value="2"/>
</dbReference>
<dbReference type="InterPro" id="IPR001356">
    <property type="entry name" value="HD"/>
</dbReference>
<dbReference type="InterPro" id="IPR027008">
    <property type="entry name" value="Teashirt_fam"/>
</dbReference>
<dbReference type="InterPro" id="IPR013087">
    <property type="entry name" value="Znf_C2H2_type"/>
</dbReference>
<dbReference type="PANTHER" id="PTHR12487:SF5">
    <property type="entry name" value="TEASHIRT HOMOLOG 3"/>
    <property type="match status" value="1"/>
</dbReference>
<dbReference type="PANTHER" id="PTHR12487">
    <property type="entry name" value="TEASHIRT-RELATED"/>
    <property type="match status" value="1"/>
</dbReference>
<dbReference type="Pfam" id="PF13912">
    <property type="entry name" value="zf-C2H2_6"/>
    <property type="match status" value="1"/>
</dbReference>
<dbReference type="SMART" id="SM00389">
    <property type="entry name" value="HOX"/>
    <property type="match status" value="1"/>
</dbReference>
<dbReference type="SMART" id="SM00355">
    <property type="entry name" value="ZnF_C2H2"/>
    <property type="match status" value="5"/>
</dbReference>
<dbReference type="PROSITE" id="PS50071">
    <property type="entry name" value="HOMEOBOX_2"/>
    <property type="match status" value="1"/>
</dbReference>
<dbReference type="PROSITE" id="PS00028">
    <property type="entry name" value="ZINC_FINGER_C2H2_1"/>
    <property type="match status" value="4"/>
</dbReference>
<dbReference type="PROSITE" id="PS50157">
    <property type="entry name" value="ZINC_FINGER_C2H2_2"/>
    <property type="match status" value="2"/>
</dbReference>
<gene>
    <name type="primary">Tshz3</name>
    <name type="synonym">Zfp537</name>
</gene>
<sequence>MAAYVSDELKAAALVEDDIEPEEQVADGEPSAKYMCPEKELSKACPSYQNSPAAEFSSHEMDSESHISETSDRMADFESSSIKNEEETKEVQVPLEDTTVSDSLEQMKAVYNNFLSNSYWSNLNLNLHQPSSENNGGGSSSSSSSSSSSCGSGSFDWHQSAMAKTLQQVSQNRMLPEPSLFSTVQLYRQSSKLYGSIFTGASKFRCKDCSAAYDTLVELTVHMNETGHYRDDNHETDNNNPKRWSKPRKRSLLEMEGKEDAQKVLKCMYCGHSFESLQDLSVHMIKTKHYQKVPLKEPVTPVAAKIIPAARKKPSLELELPSSPDSTGGTPKATLSDASDALQKNSNPYITPNNRYGHQNGASYAWHFEARKSQILKCMECGSSHDTLQELTAHMMVTGHFIKVTNSAMKKGKPIMETPVTPTITTLLDEKVQSVPLAATTFTSPSNTPASVSPKLTVEIKKEVDKEKAVLDEKPKEKEKASEEEEKYDISSKYHYLTENDLEESPKGGLDILKSLENTVTSAINKAQNGTPSWGGYPSIHAAYQLPNMMKLSLGSSGKSTPLKPMFGNSEIVSPTKTQTLVSPPSSQTSPMPKTNFHAMEELVKKVTEKVAKVEEKMKEPDSKLSPPKRATPSPCSSEQSEPIKMEASSGSGFKSQENSPSPPRDVCKEASPSAEPVENGKELVKPLSGGSLSGSTAIITDHPPEQPFVNPLSALQSVMNIHLGKAAKPSLPALDPMSMLFKMSNSLAEKAAVATPPPLQAKKAEHLDRYFYHVNNDQPIDLTKGKSDKGCSLGSGLLSPTSTSPATSSSTVTTAKTSAVVSFMSNSPLRENALSDISDMLKNLTESHTSKSSTPSSISEKSDIDGATLEEAEESTPAQKRKGRQSNWNPQHLLILQAQFAASLRQTSEGKYIMSDLSPQERMHISRFTGLSMTTISHWLANVKYQLRRTGGTKFLKNLDTGHPVFFCNDCASQIRTPSTYISHLESHLGFRLRDLSKLSTEQINNQIAQTKSPSEKMVTSSPEEDLGTTYQCKLCNRTFASKHAVKLHLSKTHGKSPEDHLLFVSELEKQ</sequence>
<comment type="function">
    <text evidence="3">Transcriptional regulator involved in developmental processes. Functions in association with APBB1, SET and HDAC factors as a transcriptional repressor, that inhibits the expression of CASP4. TSHZ3-mediated transcription repression involves the recruitment of histone deacetylases HDAC1 and HDAC2. Associates with chromatin in a region surrounding the CASP4 transcriptional start site(s). Regulates the development of neurons involved in both respiratory rhythm and airflow control. Promotes maintenance of nucleus ambiguus (nA) motoneurons, which govern upper airway function, and establishes a respiratory rhythm generator (RRG) activity compatible with survival at birth. Involved in the differentiation of the proximal uretic smooth muscle cells during developmental processes. Involved in the up-regulation of myocardin, that directs the expression of smooth muscle cells in the proximal ureter (By similarity). Involved in the modulation of glutamatergic synaptic transmission and long-term synaptic potentiation (By similarity).</text>
</comment>
<comment type="subunit">
    <text evidence="1 7">Interacts (via N-terminus) with HDAC1 and HDAC2; the interaction is direct. Found in a trimeric complex with APBB1 and HDAC1; the interaction between HDAC1 and APBB1 is mediated by TSHZ3 (By similarity). Interacts (via homeobox domain) with APBB1 (via PID domain 1).</text>
</comment>
<comment type="subcellular location">
    <subcellularLocation>
        <location evidence="5 7">Nucleus</location>
    </subcellularLocation>
    <subcellularLocation>
        <location evidence="7">Cell projection</location>
        <location evidence="7">Growth cone</location>
    </subcellularLocation>
    <text evidence="1">Colocalizes with APBB1 in the nucleus (By similarity). Colocalizes with APBB1 in axonal growth cone.</text>
</comment>
<comment type="tissue specificity">
    <text evidence="7">Expressed in cortical neurons.</text>
</comment>
<comment type="similarity">
    <text evidence="8">Belongs to the teashirt C2H2-type zinc-finger protein family.</text>
</comment>
<comment type="sequence caution" evidence="8">
    <conflict type="erroneous initiation">
        <sequence resource="EMBL-CDS" id="EDM07600"/>
    </conflict>
    <text>Truncated N-terminus.</text>
</comment>
<comment type="online information" name="Protein Spotlight">
    <link uri="https://www.proteinspotlight.org/back_issues/122"/>
    <text>Life's first breath - Issue 122 of October 2010</text>
</comment>
<feature type="chain" id="PRO_0000399476" description="Teashirt homolog 3">
    <location>
        <begin position="1"/>
        <end position="1072"/>
    </location>
</feature>
<feature type="zinc finger region" description="C2H2-type 1" evidence="4">
    <location>
        <begin position="204"/>
        <end position="228"/>
    </location>
</feature>
<feature type="zinc finger region" description="C2H2-type 2" evidence="4">
    <location>
        <begin position="265"/>
        <end position="289"/>
    </location>
</feature>
<feature type="zinc finger region" description="C2H2-type 3; atypical" evidence="4">
    <location>
        <begin position="376"/>
        <end position="400"/>
    </location>
</feature>
<feature type="DNA-binding region" description="Homeobox; atypical" evidence="5">
    <location>
        <begin position="882"/>
        <end position="952"/>
    </location>
</feature>
<feature type="zinc finger region" description="C2H2-type 4" evidence="4">
    <location>
        <begin position="967"/>
        <end position="989"/>
    </location>
</feature>
<feature type="zinc finger region" description="C2H2-type 5" evidence="4">
    <location>
        <begin position="1032"/>
        <end position="1055"/>
    </location>
</feature>
<feature type="region of interest" description="Disordered" evidence="6">
    <location>
        <begin position="44"/>
        <end position="71"/>
    </location>
</feature>
<feature type="region of interest" description="Disordered" evidence="6">
    <location>
        <begin position="130"/>
        <end position="153"/>
    </location>
</feature>
<feature type="region of interest" description="Disordered" evidence="6">
    <location>
        <begin position="228"/>
        <end position="247"/>
    </location>
</feature>
<feature type="region of interest" description="Disordered" evidence="6">
    <location>
        <begin position="315"/>
        <end position="336"/>
    </location>
</feature>
<feature type="region of interest" description="Disordered" evidence="6">
    <location>
        <begin position="469"/>
        <end position="489"/>
    </location>
</feature>
<feature type="region of interest" description="Disordered" evidence="6">
    <location>
        <begin position="569"/>
        <end position="594"/>
    </location>
</feature>
<feature type="region of interest" description="Disordered" evidence="6">
    <location>
        <begin position="616"/>
        <end position="690"/>
    </location>
</feature>
<feature type="region of interest" description="Disordered" evidence="6">
    <location>
        <begin position="784"/>
        <end position="815"/>
    </location>
</feature>
<feature type="region of interest" description="Disordered" evidence="6">
    <location>
        <begin position="846"/>
        <end position="888"/>
    </location>
</feature>
<feature type="compositionally biased region" description="Basic and acidic residues" evidence="6">
    <location>
        <begin position="57"/>
        <end position="71"/>
    </location>
</feature>
<feature type="compositionally biased region" description="Basic and acidic residues" evidence="6">
    <location>
        <begin position="228"/>
        <end position="237"/>
    </location>
</feature>
<feature type="compositionally biased region" description="Basic and acidic residues" evidence="6">
    <location>
        <begin position="469"/>
        <end position="481"/>
    </location>
</feature>
<feature type="compositionally biased region" description="Polar residues" evidence="6">
    <location>
        <begin position="571"/>
        <end position="593"/>
    </location>
</feature>
<feature type="compositionally biased region" description="Polar residues" evidence="6">
    <location>
        <begin position="649"/>
        <end position="660"/>
    </location>
</feature>
<feature type="compositionally biased region" description="Low complexity" evidence="6">
    <location>
        <begin position="791"/>
        <end position="815"/>
    </location>
</feature>
<feature type="compositionally biased region" description="Low complexity" evidence="6">
    <location>
        <begin position="847"/>
        <end position="860"/>
    </location>
</feature>
<feature type="modified residue" description="Phosphoserine" evidence="2">
    <location>
        <position position="672"/>
    </location>
</feature>
<organism>
    <name type="scientific">Rattus norvegicus</name>
    <name type="common">Rat</name>
    <dbReference type="NCBI Taxonomy" id="10116"/>
    <lineage>
        <taxon>Eukaryota</taxon>
        <taxon>Metazoa</taxon>
        <taxon>Chordata</taxon>
        <taxon>Craniata</taxon>
        <taxon>Vertebrata</taxon>
        <taxon>Euteleostomi</taxon>
        <taxon>Mammalia</taxon>
        <taxon>Eutheria</taxon>
        <taxon>Euarchontoglires</taxon>
        <taxon>Glires</taxon>
        <taxon>Rodentia</taxon>
        <taxon>Myomorpha</taxon>
        <taxon>Muroidea</taxon>
        <taxon>Muridae</taxon>
        <taxon>Murinae</taxon>
        <taxon>Rattus</taxon>
    </lineage>
</organism>
<name>TSH3_RAT</name>
<keyword id="KW-0966">Cell projection</keyword>
<keyword id="KW-0217">Developmental protein</keyword>
<keyword id="KW-0238">DNA-binding</keyword>
<keyword id="KW-0371">Homeobox</keyword>
<keyword id="KW-0479">Metal-binding</keyword>
<keyword id="KW-0539">Nucleus</keyword>
<keyword id="KW-0597">Phosphoprotein</keyword>
<keyword id="KW-1185">Reference proteome</keyword>
<keyword id="KW-0677">Repeat</keyword>
<keyword id="KW-0678">Repressor</keyword>
<keyword id="KW-0804">Transcription</keyword>
<keyword id="KW-0805">Transcription regulation</keyword>
<keyword id="KW-0862">Zinc</keyword>
<keyword id="KW-0863">Zinc-finger</keyword>
<proteinExistence type="evidence at protein level"/>
<evidence type="ECO:0000250" key="1"/>
<evidence type="ECO:0000250" key="2">
    <source>
        <dbReference type="UniProtKB" id="Q63HK5"/>
    </source>
</evidence>
<evidence type="ECO:0000250" key="3">
    <source>
        <dbReference type="UniProtKB" id="Q8CGV9"/>
    </source>
</evidence>
<evidence type="ECO:0000255" key="4">
    <source>
        <dbReference type="PROSITE-ProRule" id="PRU00042"/>
    </source>
</evidence>
<evidence type="ECO:0000255" key="5">
    <source>
        <dbReference type="PROSITE-ProRule" id="PRU00108"/>
    </source>
</evidence>
<evidence type="ECO:0000256" key="6">
    <source>
        <dbReference type="SAM" id="MobiDB-lite"/>
    </source>
</evidence>
<evidence type="ECO:0000269" key="7">
    <source>
    </source>
</evidence>
<evidence type="ECO:0000305" key="8"/>
<accession>D3ZKB9</accession>
<protein>
    <recommendedName>
        <fullName>Teashirt homolog 3</fullName>
    </recommendedName>
    <alternativeName>
        <fullName>Zinc finger protein 537</fullName>
    </alternativeName>
</protein>